<comment type="function">
    <text evidence="1">May play a key role in the regulation of the intracellular concentration of adenosylhomocysteine.</text>
</comment>
<comment type="catalytic activity">
    <reaction evidence="1">
        <text>S-adenosyl-L-homocysteine + H2O = L-homocysteine + adenosine</text>
        <dbReference type="Rhea" id="RHEA:21708"/>
        <dbReference type="ChEBI" id="CHEBI:15377"/>
        <dbReference type="ChEBI" id="CHEBI:16335"/>
        <dbReference type="ChEBI" id="CHEBI:57856"/>
        <dbReference type="ChEBI" id="CHEBI:58199"/>
        <dbReference type="EC" id="3.13.2.1"/>
    </reaction>
</comment>
<comment type="cofactor">
    <cofactor evidence="1">
        <name>NAD(+)</name>
        <dbReference type="ChEBI" id="CHEBI:57540"/>
    </cofactor>
    <text evidence="1">Binds 1 NAD(+) per subunit.</text>
</comment>
<comment type="pathway">
    <text evidence="1">Amino-acid biosynthesis; L-homocysteine biosynthesis; L-homocysteine from S-adenosyl-L-homocysteine: step 1/1.</text>
</comment>
<comment type="subcellular location">
    <subcellularLocation>
        <location evidence="1">Cytoplasm</location>
    </subcellularLocation>
</comment>
<comment type="similarity">
    <text evidence="1">Belongs to the adenosylhomocysteinase family.</text>
</comment>
<name>SAHH_BACFR</name>
<protein>
    <recommendedName>
        <fullName evidence="1">Adenosylhomocysteinase</fullName>
        <ecNumber evidence="1">3.13.2.1</ecNumber>
    </recommendedName>
    <alternativeName>
        <fullName evidence="1">S-adenosyl-L-homocysteine hydrolase</fullName>
        <shortName evidence="1">AdoHcyase</shortName>
    </alternativeName>
</protein>
<gene>
    <name evidence="1" type="primary">ahcY</name>
    <name type="ordered locus">BF4468</name>
</gene>
<feature type="chain" id="PRO_0000116942" description="Adenosylhomocysteinase">
    <location>
        <begin position="1"/>
        <end position="487"/>
    </location>
</feature>
<feature type="binding site" evidence="1">
    <location>
        <position position="76"/>
    </location>
    <ligand>
        <name>substrate</name>
    </ligand>
</feature>
<feature type="binding site" evidence="1">
    <location>
        <position position="151"/>
    </location>
    <ligand>
        <name>substrate</name>
    </ligand>
</feature>
<feature type="binding site" evidence="1">
    <location>
        <position position="212"/>
    </location>
    <ligand>
        <name>substrate</name>
    </ligand>
</feature>
<feature type="binding site" evidence="1">
    <location>
        <begin position="213"/>
        <end position="215"/>
    </location>
    <ligand>
        <name>NAD(+)</name>
        <dbReference type="ChEBI" id="CHEBI:57540"/>
    </ligand>
</feature>
<feature type="binding site" evidence="1">
    <location>
        <position position="242"/>
    </location>
    <ligand>
        <name>substrate</name>
    </ligand>
</feature>
<feature type="binding site" evidence="1">
    <location>
        <position position="246"/>
    </location>
    <ligand>
        <name>substrate</name>
    </ligand>
</feature>
<feature type="binding site" evidence="1">
    <location>
        <position position="247"/>
    </location>
    <ligand>
        <name>NAD(+)</name>
        <dbReference type="ChEBI" id="CHEBI:57540"/>
    </ligand>
</feature>
<feature type="binding site" evidence="1">
    <location>
        <begin position="276"/>
        <end position="281"/>
    </location>
    <ligand>
        <name>NAD(+)</name>
        <dbReference type="ChEBI" id="CHEBI:57540"/>
    </ligand>
</feature>
<feature type="binding site" evidence="1">
    <location>
        <position position="299"/>
    </location>
    <ligand>
        <name>NAD(+)</name>
        <dbReference type="ChEBI" id="CHEBI:57540"/>
    </ligand>
</feature>
<feature type="binding site" evidence="1">
    <location>
        <position position="334"/>
    </location>
    <ligand>
        <name>NAD(+)</name>
        <dbReference type="ChEBI" id="CHEBI:57540"/>
    </ligand>
</feature>
<feature type="binding site" evidence="1">
    <location>
        <begin position="355"/>
        <end position="357"/>
    </location>
    <ligand>
        <name>NAD(+)</name>
        <dbReference type="ChEBI" id="CHEBI:57540"/>
    </ligand>
</feature>
<feature type="binding site" evidence="1">
    <location>
        <position position="403"/>
    </location>
    <ligand>
        <name>NAD(+)</name>
        <dbReference type="ChEBI" id="CHEBI:57540"/>
    </ligand>
</feature>
<organism>
    <name type="scientific">Bacteroides fragilis (strain YCH46)</name>
    <dbReference type="NCBI Taxonomy" id="295405"/>
    <lineage>
        <taxon>Bacteria</taxon>
        <taxon>Pseudomonadati</taxon>
        <taxon>Bacteroidota</taxon>
        <taxon>Bacteroidia</taxon>
        <taxon>Bacteroidales</taxon>
        <taxon>Bacteroidaceae</taxon>
        <taxon>Bacteroides</taxon>
    </lineage>
</organism>
<dbReference type="EC" id="3.13.2.1" evidence="1"/>
<dbReference type="EMBL" id="AP006841">
    <property type="protein sequence ID" value="BAD51205.1"/>
    <property type="molecule type" value="Genomic_DNA"/>
</dbReference>
<dbReference type="RefSeq" id="YP_101739.1">
    <property type="nucleotide sequence ID" value="NC_006347.1"/>
</dbReference>
<dbReference type="SMR" id="Q64MT2"/>
<dbReference type="STRING" id="295405.BF4468"/>
<dbReference type="KEGG" id="bfr:BF4468"/>
<dbReference type="PATRIC" id="fig|295405.11.peg.4306"/>
<dbReference type="HOGENOM" id="CLU_025194_2_1_10"/>
<dbReference type="OrthoDB" id="9802717at2"/>
<dbReference type="UniPathway" id="UPA00314">
    <property type="reaction ID" value="UER00076"/>
</dbReference>
<dbReference type="Proteomes" id="UP000002197">
    <property type="component" value="Chromosome"/>
</dbReference>
<dbReference type="GO" id="GO:0005829">
    <property type="term" value="C:cytosol"/>
    <property type="evidence" value="ECO:0007669"/>
    <property type="project" value="TreeGrafter"/>
</dbReference>
<dbReference type="GO" id="GO:0004013">
    <property type="term" value="F:adenosylhomocysteinase activity"/>
    <property type="evidence" value="ECO:0007669"/>
    <property type="project" value="UniProtKB-UniRule"/>
</dbReference>
<dbReference type="GO" id="GO:0071269">
    <property type="term" value="P:L-homocysteine biosynthetic process"/>
    <property type="evidence" value="ECO:0007669"/>
    <property type="project" value="UniProtKB-UniRule"/>
</dbReference>
<dbReference type="GO" id="GO:0006730">
    <property type="term" value="P:one-carbon metabolic process"/>
    <property type="evidence" value="ECO:0007669"/>
    <property type="project" value="UniProtKB-KW"/>
</dbReference>
<dbReference type="GO" id="GO:0033353">
    <property type="term" value="P:S-adenosylmethionine cycle"/>
    <property type="evidence" value="ECO:0007669"/>
    <property type="project" value="TreeGrafter"/>
</dbReference>
<dbReference type="CDD" id="cd00401">
    <property type="entry name" value="SAHH"/>
    <property type="match status" value="1"/>
</dbReference>
<dbReference type="FunFam" id="3.40.50.720:FF:000004">
    <property type="entry name" value="Adenosylhomocysteinase"/>
    <property type="match status" value="1"/>
</dbReference>
<dbReference type="Gene3D" id="3.40.50.1480">
    <property type="entry name" value="Adenosylhomocysteinase-like"/>
    <property type="match status" value="1"/>
</dbReference>
<dbReference type="Gene3D" id="3.40.50.720">
    <property type="entry name" value="NAD(P)-binding Rossmann-like Domain"/>
    <property type="match status" value="1"/>
</dbReference>
<dbReference type="HAMAP" id="MF_00563">
    <property type="entry name" value="AdoHcyase"/>
    <property type="match status" value="1"/>
</dbReference>
<dbReference type="InterPro" id="IPR042172">
    <property type="entry name" value="Adenosylhomocyst_ase-like_sf"/>
</dbReference>
<dbReference type="InterPro" id="IPR000043">
    <property type="entry name" value="Adenosylhomocysteinase-like"/>
</dbReference>
<dbReference type="InterPro" id="IPR015878">
    <property type="entry name" value="Ado_hCys_hydrolase_NAD-bd"/>
</dbReference>
<dbReference type="InterPro" id="IPR036291">
    <property type="entry name" value="NAD(P)-bd_dom_sf"/>
</dbReference>
<dbReference type="InterPro" id="IPR020082">
    <property type="entry name" value="S-Ado-L-homoCys_hydrolase_CS"/>
</dbReference>
<dbReference type="NCBIfam" id="TIGR00936">
    <property type="entry name" value="ahcY"/>
    <property type="match status" value="1"/>
</dbReference>
<dbReference type="NCBIfam" id="NF004005">
    <property type="entry name" value="PRK05476.2-3"/>
    <property type="match status" value="1"/>
</dbReference>
<dbReference type="PANTHER" id="PTHR23420">
    <property type="entry name" value="ADENOSYLHOMOCYSTEINASE"/>
    <property type="match status" value="1"/>
</dbReference>
<dbReference type="PANTHER" id="PTHR23420:SF0">
    <property type="entry name" value="ADENOSYLHOMOCYSTEINASE"/>
    <property type="match status" value="1"/>
</dbReference>
<dbReference type="Pfam" id="PF05221">
    <property type="entry name" value="AdoHcyase"/>
    <property type="match status" value="1"/>
</dbReference>
<dbReference type="Pfam" id="PF00670">
    <property type="entry name" value="AdoHcyase_NAD"/>
    <property type="match status" value="1"/>
</dbReference>
<dbReference type="PIRSF" id="PIRSF001109">
    <property type="entry name" value="Ad_hcy_hydrolase"/>
    <property type="match status" value="1"/>
</dbReference>
<dbReference type="SMART" id="SM00996">
    <property type="entry name" value="AdoHcyase"/>
    <property type="match status" value="1"/>
</dbReference>
<dbReference type="SMART" id="SM00997">
    <property type="entry name" value="AdoHcyase_NAD"/>
    <property type="match status" value="1"/>
</dbReference>
<dbReference type="SUPFAM" id="SSF52283">
    <property type="entry name" value="Formate/glycerate dehydrogenase catalytic domain-like"/>
    <property type="match status" value="1"/>
</dbReference>
<dbReference type="SUPFAM" id="SSF51735">
    <property type="entry name" value="NAD(P)-binding Rossmann-fold domains"/>
    <property type="match status" value="1"/>
</dbReference>
<dbReference type="PROSITE" id="PS00738">
    <property type="entry name" value="ADOHCYASE_1"/>
    <property type="match status" value="1"/>
</dbReference>
<dbReference type="PROSITE" id="PS00739">
    <property type="entry name" value="ADOHCYASE_2"/>
    <property type="match status" value="1"/>
</dbReference>
<accession>Q64MT2</accession>
<reference key="1">
    <citation type="journal article" date="2004" name="Proc. Natl. Acad. Sci. U.S.A.">
        <title>Genomic analysis of Bacteroides fragilis reveals extensive DNA inversions regulating cell surface adaptation.</title>
        <authorList>
            <person name="Kuwahara T."/>
            <person name="Yamashita A."/>
            <person name="Hirakawa H."/>
            <person name="Nakayama H."/>
            <person name="Toh H."/>
            <person name="Okada N."/>
            <person name="Kuhara S."/>
            <person name="Hattori M."/>
            <person name="Hayashi T."/>
            <person name="Ohnishi Y."/>
        </authorList>
    </citation>
    <scope>NUCLEOTIDE SEQUENCE [LARGE SCALE GENOMIC DNA]</scope>
    <source>
        <strain>YCH46</strain>
    </source>
</reference>
<keyword id="KW-0963">Cytoplasm</keyword>
<keyword id="KW-0378">Hydrolase</keyword>
<keyword id="KW-0520">NAD</keyword>
<keyword id="KW-0554">One-carbon metabolism</keyword>
<sequence>MFYLCTTLYFKQFTFMSTELFSTLPYKVADITLADFGRKEIDLAEKEMPGLMALREKYGESKPLKGARIMGSLHMTIQTAVLIETLVALGAEVRWCSCNIYSTQDHAAAAIAASGVAVFAWKGETLADYWWCTLQALNFEGGKGPTVIVDDGGDATMMIHVGYEAENNAAVLDKEVHAEDEIELNAILKKVLAEDKERWHRVAAEVRGVSEETTTGVHRLYQMQEEGKLLFPAFNVNDSVTKSKFDNLYGCRESLADGIKRATDVMIAGKVVVVCGYGDVGKGCSHSMRSYGARVLVTEVDPICALQAAMEGFEVVTMEDACKEGNIFVTTTGNIDIIRIDHMEQMKDQAIVCNIGHFDNEIQVDALKHYPGIKRVNIKPQVDRYYFPDGHSIILLADGRLVNLGCATGHPSFVMSNSFTNQTLAQIELFNKKYDINVYRLPKHLDEEVARLHLEKIGVKLTKLTPEQAAYIGVSVDGPYKADHYRY</sequence>
<proteinExistence type="inferred from homology"/>
<evidence type="ECO:0000255" key="1">
    <source>
        <dbReference type="HAMAP-Rule" id="MF_00563"/>
    </source>
</evidence>